<accession>Q9AGW0</accession>
<keyword id="KW-0067">ATP-binding</keyword>
<keyword id="KW-0963">Cytoplasm</keyword>
<keyword id="KW-0227">DNA damage</keyword>
<keyword id="KW-0233">DNA recombination</keyword>
<keyword id="KW-0234">DNA repair</keyword>
<keyword id="KW-0238">DNA-binding</keyword>
<keyword id="KW-0547">Nucleotide-binding</keyword>
<keyword id="KW-0742">SOS response</keyword>
<sequence>MAKKTKKAEEITKKFGDERRKALDDALKNIEKDFGKGAVMRLGERAEQKVQVMSSGSLALDIALGAGGYPKGRIVEIYGPESSGKTTVALHAVAQAQKEGGIAAFIDAEHALDPAYAAALGVNIDELLLSQPDSGEQDLEIAGKLIDSGAVDLVVVDSVAALVPRAEIDGDIGDSHVGLQARMMMQAMHKLTASINKTKTIAIFINQLREKVGVMFGNPETTPGGRALKFYSSVRLDVRGNTQIKGTGEHKDHNVGKETKIKVVKNKVAPPFREAFVEIMYGEGISRTGELIKIASDLDIIQKAGAWYSYNGEKIGQGSENAKKYLADNPAIFDEIDHKVRVHFGMTEDDSPVQSELVEEKNEADDLVLDLDNAIEIEE</sequence>
<dbReference type="EMBL" id="AF326345">
    <property type="protein sequence ID" value="AAK16709.1"/>
    <property type="status" value="ALT_INIT"/>
    <property type="molecule type" value="Genomic_DNA"/>
</dbReference>
<dbReference type="SMR" id="Q9AGW0"/>
<dbReference type="GO" id="GO:0005829">
    <property type="term" value="C:cytosol"/>
    <property type="evidence" value="ECO:0007669"/>
    <property type="project" value="TreeGrafter"/>
</dbReference>
<dbReference type="GO" id="GO:0005524">
    <property type="term" value="F:ATP binding"/>
    <property type="evidence" value="ECO:0007669"/>
    <property type="project" value="UniProtKB-UniRule"/>
</dbReference>
<dbReference type="GO" id="GO:0016887">
    <property type="term" value="F:ATP hydrolysis activity"/>
    <property type="evidence" value="ECO:0007669"/>
    <property type="project" value="InterPro"/>
</dbReference>
<dbReference type="GO" id="GO:0140664">
    <property type="term" value="F:ATP-dependent DNA damage sensor activity"/>
    <property type="evidence" value="ECO:0007669"/>
    <property type="project" value="InterPro"/>
</dbReference>
<dbReference type="GO" id="GO:0003684">
    <property type="term" value="F:damaged DNA binding"/>
    <property type="evidence" value="ECO:0007669"/>
    <property type="project" value="UniProtKB-UniRule"/>
</dbReference>
<dbReference type="GO" id="GO:0003697">
    <property type="term" value="F:single-stranded DNA binding"/>
    <property type="evidence" value="ECO:0007669"/>
    <property type="project" value="UniProtKB-UniRule"/>
</dbReference>
<dbReference type="GO" id="GO:0006310">
    <property type="term" value="P:DNA recombination"/>
    <property type="evidence" value="ECO:0007669"/>
    <property type="project" value="UniProtKB-UniRule"/>
</dbReference>
<dbReference type="GO" id="GO:0006281">
    <property type="term" value="P:DNA repair"/>
    <property type="evidence" value="ECO:0007669"/>
    <property type="project" value="UniProtKB-UniRule"/>
</dbReference>
<dbReference type="GO" id="GO:0009432">
    <property type="term" value="P:SOS response"/>
    <property type="evidence" value="ECO:0007669"/>
    <property type="project" value="UniProtKB-UniRule"/>
</dbReference>
<dbReference type="CDD" id="cd00983">
    <property type="entry name" value="RecA"/>
    <property type="match status" value="1"/>
</dbReference>
<dbReference type="FunFam" id="3.40.50.300:FF:000087">
    <property type="entry name" value="Recombinase RecA"/>
    <property type="match status" value="1"/>
</dbReference>
<dbReference type="Gene3D" id="3.40.50.300">
    <property type="entry name" value="P-loop containing nucleotide triphosphate hydrolases"/>
    <property type="match status" value="1"/>
</dbReference>
<dbReference type="HAMAP" id="MF_00268">
    <property type="entry name" value="RecA"/>
    <property type="match status" value="1"/>
</dbReference>
<dbReference type="InterPro" id="IPR003593">
    <property type="entry name" value="AAA+_ATPase"/>
</dbReference>
<dbReference type="InterPro" id="IPR013765">
    <property type="entry name" value="DNA_recomb/repair_RecA"/>
</dbReference>
<dbReference type="InterPro" id="IPR020584">
    <property type="entry name" value="DNA_recomb/repair_RecA_CS"/>
</dbReference>
<dbReference type="InterPro" id="IPR027417">
    <property type="entry name" value="P-loop_NTPase"/>
</dbReference>
<dbReference type="InterPro" id="IPR049261">
    <property type="entry name" value="RecA-like_C"/>
</dbReference>
<dbReference type="InterPro" id="IPR049428">
    <property type="entry name" value="RecA-like_N"/>
</dbReference>
<dbReference type="InterPro" id="IPR020588">
    <property type="entry name" value="RecA_ATP-bd"/>
</dbReference>
<dbReference type="InterPro" id="IPR023400">
    <property type="entry name" value="RecA_C_sf"/>
</dbReference>
<dbReference type="InterPro" id="IPR020587">
    <property type="entry name" value="RecA_monomer-monomer_interface"/>
</dbReference>
<dbReference type="NCBIfam" id="TIGR02012">
    <property type="entry name" value="tigrfam_recA"/>
    <property type="match status" value="1"/>
</dbReference>
<dbReference type="PANTHER" id="PTHR45900:SF1">
    <property type="entry name" value="MITOCHONDRIAL DNA REPAIR PROTEIN RECA HOMOLOG-RELATED"/>
    <property type="match status" value="1"/>
</dbReference>
<dbReference type="PANTHER" id="PTHR45900">
    <property type="entry name" value="RECA"/>
    <property type="match status" value="1"/>
</dbReference>
<dbReference type="Pfam" id="PF00154">
    <property type="entry name" value="RecA"/>
    <property type="match status" value="1"/>
</dbReference>
<dbReference type="Pfam" id="PF21096">
    <property type="entry name" value="RecA_C"/>
    <property type="match status" value="1"/>
</dbReference>
<dbReference type="PRINTS" id="PR00142">
    <property type="entry name" value="RECA"/>
</dbReference>
<dbReference type="SMART" id="SM00382">
    <property type="entry name" value="AAA"/>
    <property type="match status" value="1"/>
</dbReference>
<dbReference type="SUPFAM" id="SSF52540">
    <property type="entry name" value="P-loop containing nucleoside triphosphate hydrolases"/>
    <property type="match status" value="1"/>
</dbReference>
<dbReference type="SUPFAM" id="SSF54752">
    <property type="entry name" value="RecA protein, C-terminal domain"/>
    <property type="match status" value="1"/>
</dbReference>
<dbReference type="PROSITE" id="PS00321">
    <property type="entry name" value="RECA_1"/>
    <property type="match status" value="1"/>
</dbReference>
<dbReference type="PROSITE" id="PS50162">
    <property type="entry name" value="RECA_2"/>
    <property type="match status" value="1"/>
</dbReference>
<dbReference type="PROSITE" id="PS50163">
    <property type="entry name" value="RECA_3"/>
    <property type="match status" value="1"/>
</dbReference>
<proteinExistence type="inferred from homology"/>
<protein>
    <recommendedName>
        <fullName evidence="1">Protein RecA</fullName>
    </recommendedName>
    <alternativeName>
        <fullName evidence="1">Recombinase A</fullName>
    </alternativeName>
</protein>
<organism>
    <name type="scientific">Streptococcus agalactiae</name>
    <dbReference type="NCBI Taxonomy" id="1311"/>
    <lineage>
        <taxon>Bacteria</taxon>
        <taxon>Bacillati</taxon>
        <taxon>Bacillota</taxon>
        <taxon>Bacilli</taxon>
        <taxon>Lactobacillales</taxon>
        <taxon>Streptococcaceae</taxon>
        <taxon>Streptococcus</taxon>
    </lineage>
</organism>
<comment type="function">
    <text evidence="1">Can catalyze the hydrolysis of ATP in the presence of single-stranded DNA, the ATP-dependent uptake of single-stranded DNA by duplex DNA, and the ATP-dependent hybridization of homologous single-stranded DNAs. It interacts with LexA causing its activation and leading to its autocatalytic cleavage.</text>
</comment>
<comment type="subcellular location">
    <subcellularLocation>
        <location evidence="1">Cytoplasm</location>
    </subcellularLocation>
</comment>
<comment type="similarity">
    <text evidence="1">Belongs to the RecA family.</text>
</comment>
<comment type="sequence caution" evidence="2">
    <conflict type="erroneous initiation">
        <sequence resource="EMBL-CDS" id="AAK16709"/>
    </conflict>
</comment>
<name>RECA_STRAG</name>
<evidence type="ECO:0000255" key="1">
    <source>
        <dbReference type="HAMAP-Rule" id="MF_00268"/>
    </source>
</evidence>
<evidence type="ECO:0000305" key="2"/>
<gene>
    <name evidence="1" type="primary">recA</name>
</gene>
<reference key="1">
    <citation type="submission" date="2000-12" db="EMBL/GenBank/DDBJ databases">
        <title>Cloning, sequencing and characterization of the RecA gene from Streptococcus agalactiae.</title>
        <authorList>
            <person name="Chiou J.-F."/>
        </authorList>
    </citation>
    <scope>NUCLEOTIDE SEQUENCE [GENOMIC DNA]</scope>
    <source>
        <strain>ATCC 13813 / CIP 103227 / DSM 2134 / JCM 5671 / NCTC 8181</strain>
    </source>
</reference>
<feature type="chain" id="PRO_0000122850" description="Protein RecA">
    <location>
        <begin position="1"/>
        <end position="379"/>
    </location>
</feature>
<feature type="binding site" evidence="1">
    <location>
        <begin position="79"/>
        <end position="86"/>
    </location>
    <ligand>
        <name>ATP</name>
        <dbReference type="ChEBI" id="CHEBI:30616"/>
    </ligand>
</feature>